<accession>P21754</accession>
<accession>Q06633</accession>
<accession>Q29RW0</accession>
<proteinExistence type="evidence at protein level"/>
<feature type="signal peptide" evidence="9">
    <location>
        <begin position="1"/>
        <end position="22"/>
    </location>
</feature>
<feature type="chain" id="PRO_0000041709" description="Zona pellucida sperm-binding protein 3">
    <location>
        <begin position="23"/>
        <end position="350"/>
    </location>
</feature>
<feature type="chain" id="PRO_0000304569" description="Processed zona pellucida sperm-binding protein 3">
    <location>
        <begin position="23"/>
        <end status="unknown"/>
    </location>
</feature>
<feature type="propeptide" id="PRO_0000041710" description="Removed in mature form" evidence="1">
    <location>
        <begin position="351"/>
        <end position="424"/>
    </location>
</feature>
<feature type="topological domain" description="Extracellular" evidence="4">
    <location>
        <begin position="23"/>
        <end position="387"/>
    </location>
</feature>
<feature type="transmembrane region" description="Helical" evidence="4">
    <location>
        <begin position="388"/>
        <end position="408"/>
    </location>
</feature>
<feature type="topological domain" description="Cytoplasmic" evidence="4">
    <location>
        <begin position="409"/>
        <end position="424"/>
    </location>
</feature>
<feature type="domain" description="ZP" evidence="5">
    <location>
        <begin position="45"/>
        <end position="307"/>
    </location>
</feature>
<feature type="region of interest" description="Disordered" evidence="6">
    <location>
        <begin position="330"/>
        <end position="356"/>
    </location>
</feature>
<feature type="modified residue" description="Pyrrolidone carboxylic acid" evidence="9">
    <location>
        <position position="23"/>
    </location>
</feature>
<feature type="glycosylation site" description="N-linked (GlcNAc...) asparagine" evidence="9">
    <location>
        <position position="125"/>
    </location>
</feature>
<feature type="glycosylation site" description="N-linked (GlcNAc...) asparagine" evidence="9">
    <location>
        <position position="147"/>
    </location>
</feature>
<feature type="glycosylation site" description="O-linked (GalNAc...) threonine" evidence="1">
    <location>
        <position position="156"/>
    </location>
</feature>
<feature type="glycosylation site" description="O-linked (GalNAc...) threonine" evidence="1">
    <location>
        <position position="162"/>
    </location>
</feature>
<feature type="glycosylation site" description="O-linked (GalNAc...) threonine" evidence="1">
    <location>
        <position position="163"/>
    </location>
</feature>
<feature type="glycosylation site" description="N-linked (GlcNAc...) asparagine" evidence="9">
    <location>
        <position position="272"/>
    </location>
</feature>
<feature type="disulfide bond" evidence="9">
    <location>
        <begin position="46"/>
        <end position="140"/>
    </location>
</feature>
<feature type="disulfide bond" evidence="9">
    <location>
        <begin position="78"/>
        <end position="99"/>
    </location>
</feature>
<feature type="disulfide bond" evidence="9">
    <location>
        <begin position="217"/>
        <end position="282"/>
    </location>
</feature>
<feature type="disulfide bond" evidence="9">
    <location>
        <begin position="239"/>
        <end position="300"/>
    </location>
</feature>
<feature type="splice variant" id="VSP_037556" description="In isoform 3." evidence="14 16">
    <location>
        <begin position="1"/>
        <end position="51"/>
    </location>
</feature>
<feature type="splice variant" id="VSP_006949" description="In isoform ZP3B." evidence="15">
    <original>PLIFLDRRG</original>
    <variation>ATDLPGQEW</variation>
    <location>
        <begin position="364"/>
        <end position="372"/>
    </location>
</feature>
<feature type="splice variant" id="VSP_006950" description="In isoform ZP3B." evidence="15">
    <location>
        <begin position="373"/>
        <end position="424"/>
    </location>
</feature>
<feature type="sequence variant" id="VAR_058011" description="In dbSNP:rs2286428.">
    <original>G</original>
    <variation>R</variation>
    <location>
        <position position="31"/>
    </location>
</feature>
<feature type="sequence variant" id="VAR_079712" description="In OZEMA3; loss of interaction with ZP2; dbSNP:rs1554625334." evidence="12">
    <original>A</original>
    <variation>T</variation>
    <location>
        <position position="134"/>
    </location>
</feature>
<feature type="sequence variant" id="VAR_058012" description="In dbSNP:rs2906999." evidence="7 8 10 11">
    <original>S</original>
    <variation>P</variation>
    <location>
        <position position="315"/>
    </location>
</feature>
<feature type="sequence variant" id="VAR_058013" description="In dbSNP:rs2906997.">
    <original>M</original>
    <variation>V</variation>
    <location>
        <position position="340"/>
    </location>
</feature>
<feature type="sequence conflict" description="In Ref. 2; CAA40095." evidence="17" ref="2">
    <original>R</original>
    <variation>T</variation>
    <location>
        <position position="345"/>
    </location>
</feature>
<comment type="function">
    <text>Component of the zona pellucida, an extracellular matrix surrounding oocytes which mediates sperm binding, induction of the acrosome reaction and prevents post-fertilization polyspermy. The zona pellucida is composed of 3 to 4 glycoproteins, ZP1, ZP2, ZP3, and ZP4. ZP3 is essential for sperm binding and zona matrix formation.</text>
</comment>
<comment type="subunit">
    <text evidence="2 12">Polymers of ZP2 and ZP3 organized into long filaments cross-linked by ZP1 homodimers (By similarity). Interacts with ZP1 and ZP2 (PubMed:28886344).</text>
</comment>
<comment type="interaction">
    <interactant intactId="EBI-11783624">
        <id>P21754</id>
    </interactant>
    <interactant intactId="EBI-21280149">
        <id>P10323</id>
        <label>ACR</label>
    </interactant>
    <organismsDiffer>false</organismsDiffer>
    <experiments>2</experiments>
</comment>
<comment type="interaction">
    <interactant intactId="EBI-11783624">
        <id>P21754</id>
    </interactant>
    <interactant intactId="EBI-11614013">
        <id>P45880-3</id>
        <label>VDAC2</label>
    </interactant>
    <organismsDiffer>false</organismsDiffer>
    <experiments>2</experiments>
</comment>
<comment type="interaction">
    <interactant intactId="EBI-11783624">
        <id>P21754</id>
    </interactant>
    <interactant intactId="EBI-11783624">
        <id>P21754</id>
        <label>ZP3</label>
    </interactant>
    <organismsDiffer>false</organismsDiffer>
    <experiments>6</experiments>
</comment>
<comment type="interaction">
    <interactant intactId="EBI-21279609">
        <id>P21754-1</id>
    </interactant>
    <interactant intactId="EBI-21279609">
        <id>P21754-1</id>
        <label>ZP3</label>
    </interactant>
    <organismsDiffer>false</organismsDiffer>
    <experiments>5</experiments>
</comment>
<comment type="interaction">
    <interactant intactId="EBI-17458299">
        <id>P21754-3</id>
    </interactant>
    <interactant intactId="EBI-12820543">
        <id>O75508</id>
        <label>CLDN11</label>
    </interactant>
    <organismsDiffer>false</organismsDiffer>
    <experiments>3</experiments>
</comment>
<comment type="interaction">
    <interactant intactId="EBI-17458299">
        <id>P21754-3</id>
    </interactant>
    <interactant intactId="EBI-750078">
        <id>Q13021</id>
        <label>MALL</label>
    </interactant>
    <organismsDiffer>false</organismsDiffer>
    <experiments>3</experiments>
</comment>
<comment type="subcellular location">
    <molecule>Processed zona pellucida sperm-binding protein 3</molecule>
    <subcellularLocation>
        <location evidence="13">Zona pellucida</location>
    </subcellularLocation>
</comment>
<comment type="subcellular location">
    <subcellularLocation>
        <location evidence="3">Cell membrane</location>
        <topology evidence="4">Single-pass type I membrane protein</topology>
    </subcellularLocation>
</comment>
<comment type="alternative products">
    <event type="alternative splicing"/>
    <isoform>
        <id>P21754-1</id>
        <name>ZP3A</name>
        <sequence type="displayed"/>
    </isoform>
    <isoform>
        <id>P21754-2</id>
        <name>ZP3B</name>
        <sequence type="described" ref="VSP_006949 VSP_006950"/>
    </isoform>
    <isoform>
        <id>P21754-3</id>
        <name>3</name>
        <sequence type="described" ref="VSP_037556"/>
    </isoform>
</comment>
<comment type="tissue specificity">
    <text evidence="13">Expressed in oocytes (at protein level).</text>
</comment>
<comment type="domain">
    <text>The ZP domain is involved in the polymerization of the ZP proteins to form the zona pellucida.</text>
</comment>
<comment type="PTM">
    <text evidence="9">Proteolytically cleaved before the transmembrane segment to yield the secreted ectodomain incorporated in the zona pellucida.</text>
</comment>
<comment type="PTM">
    <text evidence="1">N-glycosylated.</text>
</comment>
<comment type="PTM">
    <text evidence="1">O-glycosylated; removal of O-linked glycans may play an important role in the post-fertilization block to polyspermy.</text>
</comment>
<comment type="disease" evidence="12">
    <disease id="DI-05111">
        <name>Oocyte/zygote/embryo maturation arrest 3</name>
        <acronym>OZEMA3</acronym>
        <description>An autosomal dominant infertility disorder characterized by abnormal oocytes that lack the zona pellucida, and oocytes degeneration.</description>
        <dbReference type="MIM" id="617712"/>
    </disease>
    <text>The disease is caused by variants affecting the gene represented in this entry.</text>
</comment>
<comment type="miscellaneous">
    <molecule>Isoform ZP3B</molecule>
    <text evidence="17">Found in a second polymorphic locus which, due to an extra G residue in exon 8, has the potential to encode a truncated protein of 372 amino acids.</text>
</comment>
<comment type="similarity">
    <text evidence="17">Belongs to the ZP domain family. ZPC subfamily.</text>
</comment>
<comment type="online information" name="Protein Spotlight">
    <link uri="https://www.proteinspotlight.org/back_issues/093"/>
    <text>Molecular chastity - Issue 93 of April 2008</text>
</comment>
<sequence length="424" mass="47018">MELSYRLFICLLLWGSTELCYPQPLWLLQGGASHPETSVQPVLVECQEATLMVMVSKDLFGTGKLIRAADLTLGPEACEPLVSMDTEDVVRFEVGLHECGNSMQVTDDALVYSTFLLHDPRPVGNLSIVRTNRAEIPIECRYPRQGNVSSQAILPTWLPFRTTVFSEEKLTFSLRLMEENWNAEKRSPTFHLGDAAHLQAEIHTGSHVPLRLFVDHCVATPTPDQNASPYHTIVDFHGCLVDGLTDASSAFKVPRPGPDTLQFTVDVFHFANDSRNMIYITCHLKVTLAEQDPDELNKACSFSKPSNSWFPVEGSADICQCCNKGDCGTPSHSRRQPHVMSQWSRSASRNRRHVTEEADVTVGPLIFLDRRGDHEVEQWALPSDTSVVLLGVGLAVVVSLTLTAVILVLTRRCRTASHPVSASE</sequence>
<evidence type="ECO:0000250" key="1"/>
<evidence type="ECO:0000250" key="2">
    <source>
        <dbReference type="UniProtKB" id="P20239"/>
    </source>
</evidence>
<evidence type="ECO:0000250" key="3">
    <source>
        <dbReference type="UniProtKB" id="P48833"/>
    </source>
</evidence>
<evidence type="ECO:0000255" key="4"/>
<evidence type="ECO:0000255" key="5">
    <source>
        <dbReference type="PROSITE-ProRule" id="PRU00375"/>
    </source>
</evidence>
<evidence type="ECO:0000256" key="6">
    <source>
        <dbReference type="SAM" id="MobiDB-lite"/>
    </source>
</evidence>
<evidence type="ECO:0000269" key="7">
    <source>
    </source>
</evidence>
<evidence type="ECO:0000269" key="8">
    <source>
    </source>
</evidence>
<evidence type="ECO:0000269" key="9">
    <source>
    </source>
</evidence>
<evidence type="ECO:0000269" key="10">
    <source>
    </source>
</evidence>
<evidence type="ECO:0000269" key="11">
    <source>
    </source>
</evidence>
<evidence type="ECO:0000269" key="12">
    <source>
    </source>
</evidence>
<evidence type="ECO:0000269" key="13">
    <source>
    </source>
</evidence>
<evidence type="ECO:0000303" key="14">
    <source>
    </source>
</evidence>
<evidence type="ECO:0000303" key="15">
    <source>
    </source>
</evidence>
<evidence type="ECO:0000303" key="16">
    <source>
    </source>
</evidence>
<evidence type="ECO:0000305" key="17"/>
<name>ZP3_HUMAN</name>
<protein>
    <recommendedName>
        <fullName>Zona pellucida sperm-binding protein 3</fullName>
    </recommendedName>
    <alternativeName>
        <fullName>Sperm receptor</fullName>
    </alternativeName>
    <alternativeName>
        <fullName>ZP3A/ZP3B</fullName>
    </alternativeName>
    <alternativeName>
        <fullName>Zona pellucida glycoprotein 3</fullName>
        <shortName>Zp-3</shortName>
    </alternativeName>
    <alternativeName>
        <fullName>Zona pellucida protein C</fullName>
    </alternativeName>
    <component>
        <recommendedName>
            <fullName>Processed zona pellucida sperm-binding protein 3</fullName>
        </recommendedName>
    </component>
</protein>
<keyword id="KW-0025">Alternative splicing</keyword>
<keyword id="KW-1003">Cell membrane</keyword>
<keyword id="KW-0165">Cleavage on pair of basic residues</keyword>
<keyword id="KW-0225">Disease variant</keyword>
<keyword id="KW-1015">Disulfide bond</keyword>
<keyword id="KW-0272">Extracellular matrix</keyword>
<keyword id="KW-0278">Fertilization</keyword>
<keyword id="KW-0325">Glycoprotein</keyword>
<keyword id="KW-0472">Membrane</keyword>
<keyword id="KW-1267">Proteomics identification</keyword>
<keyword id="KW-0873">Pyrrolidone carboxylic acid</keyword>
<keyword id="KW-0675">Receptor</keyword>
<keyword id="KW-1185">Reference proteome</keyword>
<keyword id="KW-0964">Secreted</keyword>
<keyword id="KW-0732">Signal</keyword>
<keyword id="KW-0812">Transmembrane</keyword>
<keyword id="KW-1133">Transmembrane helix</keyword>
<reference key="1">
    <citation type="journal article" date="1990" name="Proc. Natl. Acad. Sci. U.S.A.">
        <title>Human homolog of the mouse sperm receptor.</title>
        <authorList>
            <person name="Chamberlin M.E."/>
            <person name="Dean J."/>
        </authorList>
    </citation>
    <scope>NUCLEOTIDE SEQUENCE [MRNA] (ISOFORM ZP3A)</scope>
    <scope>VARIANT PRO-315</scope>
</reference>
<reference key="2">
    <citation type="journal article" date="1992" name="Genomics">
        <title>Cloning and characterization of the human sperm receptor ligand ZP3: evidence for a second polymorphic allele with a different frequency in the Caucasian and Japanese populations.</title>
        <authorList>
            <person name="van Duin M."/>
            <person name="Polman J.E."/>
            <person name="Verkoelen C.C."/>
            <person name="Bunschoten H."/>
            <person name="Meyerink J.H."/>
            <person name="Olijve W."/>
            <person name="Aitken R.J."/>
        </authorList>
    </citation>
    <scope>NUCLEOTIDE SEQUENCE [MRNA] (ISOFORMS ZP3A AND ZP3B)</scope>
    <scope>VARIANT PRO-315</scope>
    <source>
        <tissue>Ovary</tissue>
    </source>
</reference>
<reference key="3">
    <citation type="journal article" date="2004" name="Nat. Genet.">
        <title>Complete sequencing and characterization of 21,243 full-length human cDNAs.</title>
        <authorList>
            <person name="Ota T."/>
            <person name="Suzuki Y."/>
            <person name="Nishikawa T."/>
            <person name="Otsuki T."/>
            <person name="Sugiyama T."/>
            <person name="Irie R."/>
            <person name="Wakamatsu A."/>
            <person name="Hayashi K."/>
            <person name="Sato H."/>
            <person name="Nagai K."/>
            <person name="Kimura K."/>
            <person name="Makita H."/>
            <person name="Sekine M."/>
            <person name="Obayashi M."/>
            <person name="Nishi T."/>
            <person name="Shibahara T."/>
            <person name="Tanaka T."/>
            <person name="Ishii S."/>
            <person name="Yamamoto J."/>
            <person name="Saito K."/>
            <person name="Kawai Y."/>
            <person name="Isono Y."/>
            <person name="Nakamura Y."/>
            <person name="Nagahari K."/>
            <person name="Murakami K."/>
            <person name="Yasuda T."/>
            <person name="Iwayanagi T."/>
            <person name="Wagatsuma M."/>
            <person name="Shiratori A."/>
            <person name="Sudo H."/>
            <person name="Hosoiri T."/>
            <person name="Kaku Y."/>
            <person name="Kodaira H."/>
            <person name="Kondo H."/>
            <person name="Sugawara M."/>
            <person name="Takahashi M."/>
            <person name="Kanda K."/>
            <person name="Yokoi T."/>
            <person name="Furuya T."/>
            <person name="Kikkawa E."/>
            <person name="Omura Y."/>
            <person name="Abe K."/>
            <person name="Kamihara K."/>
            <person name="Katsuta N."/>
            <person name="Sato K."/>
            <person name="Tanikawa M."/>
            <person name="Yamazaki M."/>
            <person name="Ninomiya K."/>
            <person name="Ishibashi T."/>
            <person name="Yamashita H."/>
            <person name="Murakawa K."/>
            <person name="Fujimori K."/>
            <person name="Tanai H."/>
            <person name="Kimata M."/>
            <person name="Watanabe M."/>
            <person name="Hiraoka S."/>
            <person name="Chiba Y."/>
            <person name="Ishida S."/>
            <person name="Ono Y."/>
            <person name="Takiguchi S."/>
            <person name="Watanabe S."/>
            <person name="Yosida M."/>
            <person name="Hotuta T."/>
            <person name="Kusano J."/>
            <person name="Kanehori K."/>
            <person name="Takahashi-Fujii A."/>
            <person name="Hara H."/>
            <person name="Tanase T.-O."/>
            <person name="Nomura Y."/>
            <person name="Togiya S."/>
            <person name="Komai F."/>
            <person name="Hara R."/>
            <person name="Takeuchi K."/>
            <person name="Arita M."/>
            <person name="Imose N."/>
            <person name="Musashino K."/>
            <person name="Yuuki H."/>
            <person name="Oshima A."/>
            <person name="Sasaki N."/>
            <person name="Aotsuka S."/>
            <person name="Yoshikawa Y."/>
            <person name="Matsunawa H."/>
            <person name="Ichihara T."/>
            <person name="Shiohata N."/>
            <person name="Sano S."/>
            <person name="Moriya S."/>
            <person name="Momiyama H."/>
            <person name="Satoh N."/>
            <person name="Takami S."/>
            <person name="Terashima Y."/>
            <person name="Suzuki O."/>
            <person name="Nakagawa S."/>
            <person name="Senoh A."/>
            <person name="Mizoguchi H."/>
            <person name="Goto Y."/>
            <person name="Shimizu F."/>
            <person name="Wakebe H."/>
            <person name="Hishigaki H."/>
            <person name="Watanabe T."/>
            <person name="Sugiyama A."/>
            <person name="Takemoto M."/>
            <person name="Kawakami B."/>
            <person name="Yamazaki M."/>
            <person name="Watanabe K."/>
            <person name="Kumagai A."/>
            <person name="Itakura S."/>
            <person name="Fukuzumi Y."/>
            <person name="Fujimori Y."/>
            <person name="Komiyama M."/>
            <person name="Tashiro H."/>
            <person name="Tanigami A."/>
            <person name="Fujiwara T."/>
            <person name="Ono T."/>
            <person name="Yamada K."/>
            <person name="Fujii Y."/>
            <person name="Ozaki K."/>
            <person name="Hirao M."/>
            <person name="Ohmori Y."/>
            <person name="Kawabata A."/>
            <person name="Hikiji T."/>
            <person name="Kobatake N."/>
            <person name="Inagaki H."/>
            <person name="Ikema Y."/>
            <person name="Okamoto S."/>
            <person name="Okitani R."/>
            <person name="Kawakami T."/>
            <person name="Noguchi S."/>
            <person name="Itoh T."/>
            <person name="Shigeta K."/>
            <person name="Senba T."/>
            <person name="Matsumura K."/>
            <person name="Nakajima Y."/>
            <person name="Mizuno T."/>
            <person name="Morinaga M."/>
            <person name="Sasaki M."/>
            <person name="Togashi T."/>
            <person name="Oyama M."/>
            <person name="Hata H."/>
            <person name="Watanabe M."/>
            <person name="Komatsu T."/>
            <person name="Mizushima-Sugano J."/>
            <person name="Satoh T."/>
            <person name="Shirai Y."/>
            <person name="Takahashi Y."/>
            <person name="Nakagawa K."/>
            <person name="Okumura K."/>
            <person name="Nagase T."/>
            <person name="Nomura N."/>
            <person name="Kikuchi H."/>
            <person name="Masuho Y."/>
            <person name="Yamashita R."/>
            <person name="Nakai K."/>
            <person name="Yada T."/>
            <person name="Nakamura Y."/>
            <person name="Ohara O."/>
            <person name="Isogai T."/>
            <person name="Sugano S."/>
        </authorList>
    </citation>
    <scope>NUCLEOTIDE SEQUENCE [LARGE SCALE MRNA] (ISOFORM 3)</scope>
    <scope>VARIANT PRO-315</scope>
    <source>
        <tissue>Lung</tissue>
    </source>
</reference>
<reference key="4">
    <citation type="journal article" date="2003" name="Nature">
        <title>The DNA sequence of human chromosome 7.</title>
        <authorList>
            <person name="Hillier L.W."/>
            <person name="Fulton R.S."/>
            <person name="Fulton L.A."/>
            <person name="Graves T.A."/>
            <person name="Pepin K.H."/>
            <person name="Wagner-McPherson C."/>
            <person name="Layman D."/>
            <person name="Maas J."/>
            <person name="Jaeger S."/>
            <person name="Walker R."/>
            <person name="Wylie K."/>
            <person name="Sekhon M."/>
            <person name="Becker M.C."/>
            <person name="O'Laughlin M.D."/>
            <person name="Schaller M.E."/>
            <person name="Fewell G.A."/>
            <person name="Delehaunty K.D."/>
            <person name="Miner T.L."/>
            <person name="Nash W.E."/>
            <person name="Cordes M."/>
            <person name="Du H."/>
            <person name="Sun H."/>
            <person name="Edwards J."/>
            <person name="Bradshaw-Cordum H."/>
            <person name="Ali J."/>
            <person name="Andrews S."/>
            <person name="Isak A."/>
            <person name="Vanbrunt A."/>
            <person name="Nguyen C."/>
            <person name="Du F."/>
            <person name="Lamar B."/>
            <person name="Courtney L."/>
            <person name="Kalicki J."/>
            <person name="Ozersky P."/>
            <person name="Bielicki L."/>
            <person name="Scott K."/>
            <person name="Holmes A."/>
            <person name="Harkins R."/>
            <person name="Harris A."/>
            <person name="Strong C.M."/>
            <person name="Hou S."/>
            <person name="Tomlinson C."/>
            <person name="Dauphin-Kohlberg S."/>
            <person name="Kozlowicz-Reilly A."/>
            <person name="Leonard S."/>
            <person name="Rohlfing T."/>
            <person name="Rock S.M."/>
            <person name="Tin-Wollam A.-M."/>
            <person name="Abbott A."/>
            <person name="Minx P."/>
            <person name="Maupin R."/>
            <person name="Strowmatt C."/>
            <person name="Latreille P."/>
            <person name="Miller N."/>
            <person name="Johnson D."/>
            <person name="Murray J."/>
            <person name="Woessner J.P."/>
            <person name="Wendl M.C."/>
            <person name="Yang S.-P."/>
            <person name="Schultz B.R."/>
            <person name="Wallis J.W."/>
            <person name="Spieth J."/>
            <person name="Bieri T.A."/>
            <person name="Nelson J.O."/>
            <person name="Berkowicz N."/>
            <person name="Wohldmann P.E."/>
            <person name="Cook L.L."/>
            <person name="Hickenbotham M.T."/>
            <person name="Eldred J."/>
            <person name="Williams D."/>
            <person name="Bedell J.A."/>
            <person name="Mardis E.R."/>
            <person name="Clifton S.W."/>
            <person name="Chissoe S.L."/>
            <person name="Marra M.A."/>
            <person name="Raymond C."/>
            <person name="Haugen E."/>
            <person name="Gillett W."/>
            <person name="Zhou Y."/>
            <person name="James R."/>
            <person name="Phelps K."/>
            <person name="Iadanoto S."/>
            <person name="Bubb K."/>
            <person name="Simms E."/>
            <person name="Levy R."/>
            <person name="Clendenning J."/>
            <person name="Kaul R."/>
            <person name="Kent W.J."/>
            <person name="Furey T.S."/>
            <person name="Baertsch R.A."/>
            <person name="Brent M.R."/>
            <person name="Keibler E."/>
            <person name="Flicek P."/>
            <person name="Bork P."/>
            <person name="Suyama M."/>
            <person name="Bailey J.A."/>
            <person name="Portnoy M.E."/>
            <person name="Torrents D."/>
            <person name="Chinwalla A.T."/>
            <person name="Gish W.R."/>
            <person name="Eddy S.R."/>
            <person name="McPherson J.D."/>
            <person name="Olson M.V."/>
            <person name="Eichler E.E."/>
            <person name="Green E.D."/>
            <person name="Waterston R.H."/>
            <person name="Wilson R.K."/>
        </authorList>
    </citation>
    <scope>NUCLEOTIDE SEQUENCE [LARGE SCALE GENOMIC DNA]</scope>
</reference>
<reference key="5">
    <citation type="journal article" date="2004" name="Genome Res.">
        <title>The status, quality, and expansion of the NIH full-length cDNA project: the Mammalian Gene Collection (MGC).</title>
        <authorList>
            <consortium name="The MGC Project Team"/>
        </authorList>
    </citation>
    <scope>NUCLEOTIDE SEQUENCE [LARGE SCALE MRNA] (ISOFORM 3)</scope>
    <scope>VARIANT PRO-315</scope>
    <source>
        <tissue>Brain</tissue>
    </source>
</reference>
<reference key="6">
    <citation type="journal article" date="2004" name="Biochemistry">
        <title>Mass spectrometry analysis of recombinant human ZP3 expressed in glycosylation-deficient CHO cells.</title>
        <authorList>
            <person name="Zhao M."/>
            <person name="Boja E.S."/>
            <person name="Hoodbhoy T."/>
            <person name="Nawrocki J."/>
            <person name="Kaufman J.B."/>
            <person name="Kresge N."/>
            <person name="Ghirlando R."/>
            <person name="Shiloach J."/>
            <person name="Pannell L."/>
            <person name="Levine R.L."/>
            <person name="Fales H.M."/>
            <person name="Dean J."/>
        </authorList>
    </citation>
    <scope>SIGNAL SEQUENCE CLEAVAGE SITE</scope>
    <scope>PYROGLUTAMATE FORMATION AT GLN-23</scope>
    <scope>PROTEOLYTIC PROCESSING</scope>
    <scope>DISULFIDE BONDS</scope>
    <scope>GLYCOSYLATION AT ASN-125; ASN-147 AND ASN-272</scope>
</reference>
<reference key="7">
    <citation type="journal article" date="2017" name="Am. J. Hum. Genet.">
        <title>A recurrent missense mutation in ZP3 causes empty follicle syndrome and female infertility.</title>
        <authorList>
            <person name="Chen T."/>
            <person name="Bian Y."/>
            <person name="Liu X."/>
            <person name="Zhao S."/>
            <person name="Wu K."/>
            <person name="Yan L."/>
            <person name="Li M."/>
            <person name="Yang Z."/>
            <person name="Liu H."/>
            <person name="Zhao H."/>
            <person name="Chen Z.J."/>
        </authorList>
    </citation>
    <scope>INVOLVEMENT IN OZEMA3</scope>
    <scope>VARIANT OZEMA3 THR-134</scope>
    <scope>CHARACTERIZATION OF VARIANT OZEMA3 THR-134</scope>
    <scope>INTERACTION WITH ZP1 AND ZP2</scope>
</reference>
<reference key="8">
    <citation type="journal article" date="2019" name="Genet. Med.">
        <title>ZP2 pathogenic variants cause in vitro fertilization failure and female infertility.</title>
        <authorList>
            <person name="Dai C."/>
            <person name="Hu L."/>
            <person name="Gong F."/>
            <person name="Tan Y."/>
            <person name="Cai S."/>
            <person name="Zhang S."/>
            <person name="Dai J."/>
            <person name="Lu C."/>
            <person name="Chen J."/>
            <person name="Chen Y."/>
            <person name="Lu G."/>
            <person name="Du J."/>
            <person name="Lin G."/>
        </authorList>
    </citation>
    <scope>SUBCELLULAR LOCATION</scope>
    <scope>TISSUE SPECIFICITY</scope>
</reference>
<gene>
    <name type="primary">ZP3</name>
    <name type="synonym">ZP3A</name>
    <name type="synonym">ZP3B</name>
    <name type="synonym">ZPC</name>
</gene>
<dbReference type="EMBL" id="M60504">
    <property type="protein sequence ID" value="AAA61336.1"/>
    <property type="molecule type" value="mRNA"/>
</dbReference>
<dbReference type="EMBL" id="X56777">
    <property type="protein sequence ID" value="CAA40095.1"/>
    <property type="molecule type" value="mRNA"/>
</dbReference>
<dbReference type="EMBL" id="AK292763">
    <property type="protein sequence ID" value="BAF85452.1"/>
    <property type="molecule type" value="mRNA"/>
</dbReference>
<dbReference type="EMBL" id="AC005522">
    <property type="status" value="NOT_ANNOTATED_CDS"/>
    <property type="molecule type" value="Genomic_DNA"/>
</dbReference>
<dbReference type="EMBL" id="BC113949">
    <property type="protein sequence ID" value="AAI13950.2"/>
    <property type="molecule type" value="mRNA"/>
</dbReference>
<dbReference type="CCDS" id="CCDS47618.1">
    <molecule id="P21754-1"/>
</dbReference>
<dbReference type="CCDS" id="CCDS5586.1">
    <molecule id="P21754-3"/>
</dbReference>
<dbReference type="PIR" id="A36000">
    <property type="entry name" value="A36000"/>
</dbReference>
<dbReference type="RefSeq" id="NP_001103824.1">
    <molecule id="P21754-1"/>
    <property type="nucleotide sequence ID" value="NM_001110354.2"/>
</dbReference>
<dbReference type="RefSeq" id="NP_009086.4">
    <molecule id="P21754-3"/>
    <property type="nucleotide sequence ID" value="NM_007155.5"/>
</dbReference>
<dbReference type="SMR" id="P21754"/>
<dbReference type="BioGRID" id="113565">
    <property type="interactions" value="23"/>
</dbReference>
<dbReference type="FunCoup" id="P21754">
    <property type="interactions" value="306"/>
</dbReference>
<dbReference type="IntAct" id="P21754">
    <property type="interactions" value="21"/>
</dbReference>
<dbReference type="MINT" id="P21754"/>
<dbReference type="STRING" id="9606.ENSP00000378326"/>
<dbReference type="GlyConnect" id="634">
    <property type="glycosylation" value="22 O-Linked glycans"/>
</dbReference>
<dbReference type="GlyCosmos" id="P21754">
    <property type="glycosylation" value="6 sites, 28 glycans"/>
</dbReference>
<dbReference type="GlyGen" id="P21754">
    <property type="glycosylation" value="19 sites, 1 N-linked glycan (1 site), 29 O-linked glycans (1 site)"/>
</dbReference>
<dbReference type="iPTMnet" id="P21754"/>
<dbReference type="PhosphoSitePlus" id="P21754"/>
<dbReference type="BioMuta" id="ZP3"/>
<dbReference type="DMDM" id="251757420"/>
<dbReference type="MassIVE" id="P21754"/>
<dbReference type="PaxDb" id="9606-ENSP00000378326"/>
<dbReference type="PeptideAtlas" id="P21754"/>
<dbReference type="ProteomicsDB" id="53897">
    <molecule id="P21754-1"/>
</dbReference>
<dbReference type="ProteomicsDB" id="53898">
    <molecule id="P21754-2"/>
</dbReference>
<dbReference type="ProteomicsDB" id="53899">
    <molecule id="P21754-3"/>
</dbReference>
<dbReference type="ABCD" id="P21754">
    <property type="antibodies" value="1 sequenced antibody"/>
</dbReference>
<dbReference type="Antibodypedia" id="29315">
    <property type="antibodies" value="130 antibodies from 24 providers"/>
</dbReference>
<dbReference type="DNASU" id="7784"/>
<dbReference type="Ensembl" id="ENST00000336517.8">
    <molecule id="P21754-3"/>
    <property type="protein sequence ID" value="ENSP00000337310.4"/>
    <property type="gene ID" value="ENSG00000188372.15"/>
</dbReference>
<dbReference type="Ensembl" id="ENST00000394857.8">
    <molecule id="P21754-1"/>
    <property type="protein sequence ID" value="ENSP00000378326.3"/>
    <property type="gene ID" value="ENSG00000188372.15"/>
</dbReference>
<dbReference type="GeneID" id="7784"/>
<dbReference type="KEGG" id="hsa:7784"/>
<dbReference type="MANE-Select" id="ENST00000394857.8">
    <property type="protein sequence ID" value="ENSP00000378326.3"/>
    <property type="RefSeq nucleotide sequence ID" value="NM_001110354.2"/>
    <property type="RefSeq protein sequence ID" value="NP_001103824.1"/>
</dbReference>
<dbReference type="UCSC" id="uc003ufc.5">
    <molecule id="P21754-1"/>
    <property type="organism name" value="human"/>
</dbReference>
<dbReference type="AGR" id="HGNC:13189"/>
<dbReference type="CTD" id="7784"/>
<dbReference type="DisGeNET" id="7784"/>
<dbReference type="GeneCards" id="ZP3"/>
<dbReference type="HGNC" id="HGNC:13189">
    <property type="gene designation" value="ZP3"/>
</dbReference>
<dbReference type="HPA" id="ENSG00000188372">
    <property type="expression patterns" value="Tissue enhanced (ovary)"/>
</dbReference>
<dbReference type="MalaCards" id="ZP3"/>
<dbReference type="MIM" id="182889">
    <property type="type" value="gene"/>
</dbReference>
<dbReference type="MIM" id="617712">
    <property type="type" value="phenotype"/>
</dbReference>
<dbReference type="neXtProt" id="NX_P21754"/>
<dbReference type="OpenTargets" id="ENSG00000188372"/>
<dbReference type="Orphanet" id="404466">
    <property type="disease" value="Female infertility due to zona pellucida defect"/>
</dbReference>
<dbReference type="PharmGKB" id="PA37757"/>
<dbReference type="VEuPathDB" id="HostDB:ENSG00000188372"/>
<dbReference type="eggNOG" id="ENOG502QSZF">
    <property type="taxonomic scope" value="Eukaryota"/>
</dbReference>
<dbReference type="GeneTree" id="ENSGT01030000234567"/>
<dbReference type="HOGENOM" id="CLU_047091_1_1_1"/>
<dbReference type="InParanoid" id="P21754"/>
<dbReference type="OMA" id="VFHFANS"/>
<dbReference type="OrthoDB" id="8880842at2759"/>
<dbReference type="PAN-GO" id="P21754">
    <property type="GO annotations" value="5 GO annotations based on evolutionary models"/>
</dbReference>
<dbReference type="PhylomeDB" id="P21754"/>
<dbReference type="TreeFam" id="TF331369"/>
<dbReference type="PathwayCommons" id="P21754"/>
<dbReference type="Reactome" id="R-HSA-2534343">
    <property type="pathway name" value="Interaction With Cumulus Cells And The Zona Pellucida"/>
</dbReference>
<dbReference type="SignaLink" id="P21754"/>
<dbReference type="SIGNOR" id="P21754"/>
<dbReference type="BioGRID-ORCS" id="7784">
    <property type="hits" value="12 hits in 1153 CRISPR screens"/>
</dbReference>
<dbReference type="ChiTaRS" id="ZP3">
    <property type="organism name" value="human"/>
</dbReference>
<dbReference type="GeneWiki" id="ZP3"/>
<dbReference type="GenomeRNAi" id="7784"/>
<dbReference type="Pharos" id="P21754">
    <property type="development level" value="Tbio"/>
</dbReference>
<dbReference type="PRO" id="PR:P21754"/>
<dbReference type="Proteomes" id="UP000005640">
    <property type="component" value="Chromosome 7"/>
</dbReference>
<dbReference type="RNAct" id="P21754">
    <property type="molecule type" value="protein"/>
</dbReference>
<dbReference type="Bgee" id="ENSG00000188372">
    <property type="expression patterns" value="Expressed in lower esophagus mucosa and 100 other cell types or tissues"/>
</dbReference>
<dbReference type="ExpressionAtlas" id="P21754">
    <property type="expression patterns" value="baseline and differential"/>
</dbReference>
<dbReference type="GO" id="GO:0062023">
    <property type="term" value="C:collagen-containing extracellular matrix"/>
    <property type="evidence" value="ECO:0000314"/>
    <property type="project" value="UniProtKB"/>
</dbReference>
<dbReference type="GO" id="GO:0035805">
    <property type="term" value="C:egg coat"/>
    <property type="evidence" value="ECO:0000314"/>
    <property type="project" value="UniProtKB"/>
</dbReference>
<dbReference type="GO" id="GO:0031012">
    <property type="term" value="C:extracellular matrix"/>
    <property type="evidence" value="ECO:0000318"/>
    <property type="project" value="GO_Central"/>
</dbReference>
<dbReference type="GO" id="GO:0005576">
    <property type="term" value="C:extracellular region"/>
    <property type="evidence" value="ECO:0000304"/>
    <property type="project" value="Reactome"/>
</dbReference>
<dbReference type="GO" id="GO:0005615">
    <property type="term" value="C:extracellular space"/>
    <property type="evidence" value="ECO:0000315"/>
    <property type="project" value="UniProtKB"/>
</dbReference>
<dbReference type="GO" id="GO:0005886">
    <property type="term" value="C:plasma membrane"/>
    <property type="evidence" value="ECO:0000250"/>
    <property type="project" value="UniProtKB"/>
</dbReference>
<dbReference type="GO" id="GO:0032190">
    <property type="term" value="F:acrosin binding"/>
    <property type="evidence" value="ECO:0000353"/>
    <property type="project" value="UniProtKB"/>
</dbReference>
<dbReference type="GO" id="GO:0030246">
    <property type="term" value="F:carbohydrate binding"/>
    <property type="evidence" value="ECO:0000314"/>
    <property type="project" value="UniProtKB"/>
</dbReference>
<dbReference type="GO" id="GO:0005201">
    <property type="term" value="F:extracellular matrix structural constituent"/>
    <property type="evidence" value="ECO:0007005"/>
    <property type="project" value="BHF-UCL"/>
</dbReference>
<dbReference type="GO" id="GO:0042802">
    <property type="term" value="F:identical protein binding"/>
    <property type="evidence" value="ECO:0000353"/>
    <property type="project" value="IntAct"/>
</dbReference>
<dbReference type="GO" id="GO:0048018">
    <property type="term" value="F:receptor ligand activity"/>
    <property type="evidence" value="ECO:0000250"/>
    <property type="project" value="UniProtKB"/>
</dbReference>
<dbReference type="GO" id="GO:0035804">
    <property type="term" value="F:structural constituent of egg coat"/>
    <property type="evidence" value="ECO:0000250"/>
    <property type="project" value="UniProtKB"/>
</dbReference>
<dbReference type="GO" id="GO:0007339">
    <property type="term" value="P:binding of sperm to zona pellucida"/>
    <property type="evidence" value="ECO:0000314"/>
    <property type="project" value="UniProtKB"/>
</dbReference>
<dbReference type="GO" id="GO:0001825">
    <property type="term" value="P:blastocyst formation"/>
    <property type="evidence" value="ECO:0000250"/>
    <property type="project" value="UniProtKB"/>
</dbReference>
<dbReference type="GO" id="GO:0035803">
    <property type="term" value="P:egg coat formation"/>
    <property type="evidence" value="ECO:0000250"/>
    <property type="project" value="UniProtKB"/>
</dbReference>
<dbReference type="GO" id="GO:0002455">
    <property type="term" value="P:humoral immune response mediated by circulating immunoglobulin"/>
    <property type="evidence" value="ECO:0000250"/>
    <property type="project" value="UniProtKB"/>
</dbReference>
<dbReference type="GO" id="GO:2000360">
    <property type="term" value="P:negative regulation of binding of sperm to zona pellucida"/>
    <property type="evidence" value="ECO:0000314"/>
    <property type="project" value="UniProtKB"/>
</dbReference>
<dbReference type="GO" id="GO:0045892">
    <property type="term" value="P:negative regulation of DNA-templated transcription"/>
    <property type="evidence" value="ECO:0000250"/>
    <property type="project" value="UniProtKB"/>
</dbReference>
<dbReference type="GO" id="GO:0048599">
    <property type="term" value="P:oocyte development"/>
    <property type="evidence" value="ECO:0000250"/>
    <property type="project" value="UniProtKB"/>
</dbReference>
<dbReference type="GO" id="GO:2000368">
    <property type="term" value="P:positive regulation of acrosomal vesicle exocytosis"/>
    <property type="evidence" value="ECO:0000314"/>
    <property type="project" value="UniProtKB"/>
</dbReference>
<dbReference type="GO" id="GO:2000344">
    <property type="term" value="P:positive regulation of acrosome reaction"/>
    <property type="evidence" value="ECO:0000314"/>
    <property type="project" value="UniProtKB"/>
</dbReference>
<dbReference type="GO" id="GO:2000388">
    <property type="term" value="P:positive regulation of antral ovarian follicle growth"/>
    <property type="evidence" value="ECO:0000250"/>
    <property type="project" value="UniProtKB"/>
</dbReference>
<dbReference type="GO" id="GO:0045893">
    <property type="term" value="P:positive regulation of DNA-templated transcription"/>
    <property type="evidence" value="ECO:0000250"/>
    <property type="project" value="UniProtKB"/>
</dbReference>
<dbReference type="GO" id="GO:0002922">
    <property type="term" value="P:positive regulation of humoral immune response"/>
    <property type="evidence" value="ECO:0000314"/>
    <property type="project" value="UniProtKB"/>
</dbReference>
<dbReference type="GO" id="GO:0050729">
    <property type="term" value="P:positive regulation of inflammatory response"/>
    <property type="evidence" value="ECO:0000250"/>
    <property type="project" value="UniProtKB"/>
</dbReference>
<dbReference type="GO" id="GO:0032753">
    <property type="term" value="P:positive regulation of interleukin-4 production"/>
    <property type="evidence" value="ECO:0000250"/>
    <property type="project" value="UniProtKB"/>
</dbReference>
<dbReference type="GO" id="GO:0002687">
    <property type="term" value="P:positive regulation of leukocyte migration"/>
    <property type="evidence" value="ECO:0000250"/>
    <property type="project" value="UniProtKB"/>
</dbReference>
<dbReference type="GO" id="GO:2000386">
    <property type="term" value="P:positive regulation of ovarian follicle development"/>
    <property type="evidence" value="ECO:0000250"/>
    <property type="project" value="UniProtKB"/>
</dbReference>
<dbReference type="GO" id="GO:0042102">
    <property type="term" value="P:positive regulation of T cell proliferation"/>
    <property type="evidence" value="ECO:0000250"/>
    <property type="project" value="UniProtKB"/>
</dbReference>
<dbReference type="GO" id="GO:0032729">
    <property type="term" value="P:positive regulation of type II interferon production"/>
    <property type="evidence" value="ECO:0000250"/>
    <property type="project" value="UniProtKB"/>
</dbReference>
<dbReference type="GO" id="GO:0001809">
    <property type="term" value="P:positive regulation of type IV hypersensitivity"/>
    <property type="evidence" value="ECO:0000250"/>
    <property type="project" value="UniProtKB"/>
</dbReference>
<dbReference type="FunFam" id="2.60.40.3210:FF:000001">
    <property type="entry name" value="Zona pellucida sperm-binding protein 3"/>
    <property type="match status" value="1"/>
</dbReference>
<dbReference type="FunFam" id="2.60.40.4100:FF:000002">
    <property type="entry name" value="Zona pellucida sperm-binding protein 3"/>
    <property type="match status" value="1"/>
</dbReference>
<dbReference type="Gene3D" id="2.60.40.4100">
    <property type="entry name" value="Zona pellucida, ZP-C domain"/>
    <property type="match status" value="1"/>
</dbReference>
<dbReference type="Gene3D" id="2.60.40.3210">
    <property type="entry name" value="Zona pellucida, ZP-N domain"/>
    <property type="match status" value="1"/>
</dbReference>
<dbReference type="InterPro" id="IPR055355">
    <property type="entry name" value="ZP-C"/>
</dbReference>
<dbReference type="InterPro" id="IPR042235">
    <property type="entry name" value="ZP-C_dom"/>
</dbReference>
<dbReference type="InterPro" id="IPR055356">
    <property type="entry name" value="ZP-N"/>
</dbReference>
<dbReference type="InterPro" id="IPR048290">
    <property type="entry name" value="ZP_chr"/>
</dbReference>
<dbReference type="InterPro" id="IPR001507">
    <property type="entry name" value="ZP_dom"/>
</dbReference>
<dbReference type="InterPro" id="IPR017977">
    <property type="entry name" value="ZP_dom_CS"/>
</dbReference>
<dbReference type="PANTHER" id="PTHR11576">
    <property type="entry name" value="ZONA PELLUCIDA SPERM-BINDING PROTEIN 3"/>
    <property type="match status" value="1"/>
</dbReference>
<dbReference type="PANTHER" id="PTHR11576:SF2">
    <property type="entry name" value="ZONA PELLUCIDA SPERM-BINDING PROTEIN 3"/>
    <property type="match status" value="1"/>
</dbReference>
<dbReference type="Pfam" id="PF00100">
    <property type="entry name" value="Zona_pellucida"/>
    <property type="match status" value="1"/>
</dbReference>
<dbReference type="Pfam" id="PF23344">
    <property type="entry name" value="ZP-N"/>
    <property type="match status" value="1"/>
</dbReference>
<dbReference type="PRINTS" id="PR00023">
    <property type="entry name" value="ZPELLUCIDA"/>
</dbReference>
<dbReference type="SMART" id="SM00241">
    <property type="entry name" value="ZP"/>
    <property type="match status" value="1"/>
</dbReference>
<dbReference type="PROSITE" id="PS00682">
    <property type="entry name" value="ZP_1"/>
    <property type="match status" value="1"/>
</dbReference>
<dbReference type="PROSITE" id="PS51034">
    <property type="entry name" value="ZP_2"/>
    <property type="match status" value="1"/>
</dbReference>
<organism>
    <name type="scientific">Homo sapiens</name>
    <name type="common">Human</name>
    <dbReference type="NCBI Taxonomy" id="9606"/>
    <lineage>
        <taxon>Eukaryota</taxon>
        <taxon>Metazoa</taxon>
        <taxon>Chordata</taxon>
        <taxon>Craniata</taxon>
        <taxon>Vertebrata</taxon>
        <taxon>Euteleostomi</taxon>
        <taxon>Mammalia</taxon>
        <taxon>Eutheria</taxon>
        <taxon>Euarchontoglires</taxon>
        <taxon>Primates</taxon>
        <taxon>Haplorrhini</taxon>
        <taxon>Catarrhini</taxon>
        <taxon>Hominidae</taxon>
        <taxon>Homo</taxon>
    </lineage>
</organism>